<sequence>MQILAISKPRNIEEAQLLRSHHELRARVFSDRLGWEVNVVGGCESDTFDDLQPTYILAVSSNDRVVGCARLLPALGPTMVANVFPSLLSAGHLNAHSSMVESSRFCVDTFLAESRGDGSIHEATLTMFAGIIEWSVANRYTEIVTVTDLRFERILARVGWPLQRIGEPRPIGATVAVAGTLPAKADTFMRLRPANYRSQIISTFGQSA</sequence>
<proteinExistence type="inferred from homology"/>
<keyword id="KW-0071">Autoinducer synthesis</keyword>
<keyword id="KW-0184">Conjugation</keyword>
<keyword id="KW-0614">Plasmid</keyword>
<keyword id="KW-0673">Quorum sensing</keyword>
<keyword id="KW-1185">Reference proteome</keyword>
<keyword id="KW-0949">S-adenosyl-L-methionine</keyword>
<keyword id="KW-0808">Transferase</keyword>
<dbReference type="EC" id="2.3.1.184"/>
<dbReference type="EMBL" id="U00090">
    <property type="protein sequence ID" value="AAB92427.1"/>
    <property type="molecule type" value="Genomic_DNA"/>
</dbReference>
<dbReference type="RefSeq" id="NP_443804.1">
    <property type="nucleotide sequence ID" value="NC_000914.2"/>
</dbReference>
<dbReference type="RefSeq" id="WP_010875432.1">
    <property type="nucleotide sequence ID" value="NC_000914.2"/>
</dbReference>
<dbReference type="SMR" id="P55394"/>
<dbReference type="KEGG" id="rhi:NGR_a04220"/>
<dbReference type="PATRIC" id="fig|394.7.peg.444"/>
<dbReference type="eggNOG" id="COG3916">
    <property type="taxonomic scope" value="Bacteria"/>
</dbReference>
<dbReference type="HOGENOM" id="CLU_085711_4_0_5"/>
<dbReference type="OrthoDB" id="6169313at2"/>
<dbReference type="Proteomes" id="UP000001054">
    <property type="component" value="Plasmid pNGR234a"/>
</dbReference>
<dbReference type="GO" id="GO:0061579">
    <property type="term" value="F:N-acyl homoserine lactone synthase activity"/>
    <property type="evidence" value="ECO:0007669"/>
    <property type="project" value="UniProtKB-EC"/>
</dbReference>
<dbReference type="GO" id="GO:0009372">
    <property type="term" value="P:quorum sensing"/>
    <property type="evidence" value="ECO:0007669"/>
    <property type="project" value="UniProtKB-KW"/>
</dbReference>
<dbReference type="GO" id="GO:0007165">
    <property type="term" value="P:signal transduction"/>
    <property type="evidence" value="ECO:0007669"/>
    <property type="project" value="TreeGrafter"/>
</dbReference>
<dbReference type="Gene3D" id="3.40.630.30">
    <property type="match status" value="1"/>
</dbReference>
<dbReference type="InterPro" id="IPR016181">
    <property type="entry name" value="Acyl_CoA_acyltransferase"/>
</dbReference>
<dbReference type="InterPro" id="IPR018311">
    <property type="entry name" value="Autoind_synth_CS"/>
</dbReference>
<dbReference type="InterPro" id="IPR001690">
    <property type="entry name" value="Autoind_synthase"/>
</dbReference>
<dbReference type="NCBIfam" id="NF010408">
    <property type="entry name" value="PRK13834.1"/>
    <property type="match status" value="1"/>
</dbReference>
<dbReference type="PANTHER" id="PTHR39322">
    <property type="entry name" value="ACYL-HOMOSERINE-LACTONE SYNTHASE"/>
    <property type="match status" value="1"/>
</dbReference>
<dbReference type="PANTHER" id="PTHR39322:SF1">
    <property type="entry name" value="ISOVALERYL-HOMOSERINE LACTONE SYNTHASE"/>
    <property type="match status" value="1"/>
</dbReference>
<dbReference type="Pfam" id="PF00765">
    <property type="entry name" value="Autoind_synth"/>
    <property type="match status" value="1"/>
</dbReference>
<dbReference type="PRINTS" id="PR01549">
    <property type="entry name" value="AUTOINDCRSYN"/>
</dbReference>
<dbReference type="SUPFAM" id="SSF55729">
    <property type="entry name" value="Acyl-CoA N-acyltransferases (Nat)"/>
    <property type="match status" value="1"/>
</dbReference>
<dbReference type="PROSITE" id="PS00949">
    <property type="entry name" value="AUTOINDUCER_SYNTH_1"/>
    <property type="match status" value="1"/>
</dbReference>
<dbReference type="PROSITE" id="PS51187">
    <property type="entry name" value="AUTOINDUCER_SYNTH_2"/>
    <property type="match status" value="1"/>
</dbReference>
<evidence type="ECO:0000250" key="1"/>
<evidence type="ECO:0000255" key="2">
    <source>
        <dbReference type="PROSITE-ProRule" id="PRU00533"/>
    </source>
</evidence>
<accession>P55394</accession>
<gene>
    <name type="primary">traI</name>
    <name type="ordered locus">NGR_a04220</name>
    <name type="ORF">y4cL</name>
</gene>
<comment type="function">
    <text evidence="1">Required for the synthesis of OHHL (N-(3-oxooctanoyl)-L-homoserine lactone), an autoinducer molecule which binds to TraR and thus acts in the control of conjugal transfer.</text>
</comment>
<comment type="catalytic activity">
    <reaction>
        <text>a fatty acyl-[ACP] + S-adenosyl-L-methionine = an N-acyl-L-homoserine lactone + S-methyl-5'-thioadenosine + holo-[ACP] + H(+)</text>
        <dbReference type="Rhea" id="RHEA:10096"/>
        <dbReference type="Rhea" id="RHEA-COMP:9685"/>
        <dbReference type="Rhea" id="RHEA-COMP:14125"/>
        <dbReference type="ChEBI" id="CHEBI:15378"/>
        <dbReference type="ChEBI" id="CHEBI:17509"/>
        <dbReference type="ChEBI" id="CHEBI:55474"/>
        <dbReference type="ChEBI" id="CHEBI:59789"/>
        <dbReference type="ChEBI" id="CHEBI:64479"/>
        <dbReference type="ChEBI" id="CHEBI:138651"/>
        <dbReference type="EC" id="2.3.1.184"/>
    </reaction>
</comment>
<comment type="similarity">
    <text evidence="2">Belongs to the autoinducer synthase family.</text>
</comment>
<geneLocation type="plasmid">
    <name>sym pNGR234a</name>
</geneLocation>
<reference key="1">
    <citation type="journal article" date="1997" name="Nature">
        <title>Molecular basis of symbiosis between Rhizobium and legumes.</title>
        <authorList>
            <person name="Freiberg C.A."/>
            <person name="Fellay R."/>
            <person name="Bairoch A."/>
            <person name="Broughton W.J."/>
            <person name="Rosenthal A."/>
            <person name="Perret X."/>
        </authorList>
    </citation>
    <scope>NUCLEOTIDE SEQUENCE [LARGE SCALE GENOMIC DNA]</scope>
    <source>
        <strain>NBRC 101917 / NGR234</strain>
    </source>
</reference>
<reference key="2">
    <citation type="journal article" date="2009" name="Appl. Environ. Microbiol.">
        <title>Rhizobium sp. strain NGR234 possesses a remarkable number of secretion systems.</title>
        <authorList>
            <person name="Schmeisser C."/>
            <person name="Liesegang H."/>
            <person name="Krysciak D."/>
            <person name="Bakkou N."/>
            <person name="Le Quere A."/>
            <person name="Wollherr A."/>
            <person name="Heinemeyer I."/>
            <person name="Morgenstern B."/>
            <person name="Pommerening-Roeser A."/>
            <person name="Flores M."/>
            <person name="Palacios R."/>
            <person name="Brenner S."/>
            <person name="Gottschalk G."/>
            <person name="Schmitz R.A."/>
            <person name="Broughton W.J."/>
            <person name="Perret X."/>
            <person name="Strittmatter A.W."/>
            <person name="Streit W.R."/>
        </authorList>
    </citation>
    <scope>NUCLEOTIDE SEQUENCE [LARGE SCALE GENOMIC DNA]</scope>
    <source>
        <strain>NBRC 101917 / NGR234</strain>
    </source>
</reference>
<feature type="chain" id="PRO_0000210900" description="Probable acyl-homoserine-lactone synthase">
    <location>
        <begin position="1"/>
        <end position="208"/>
    </location>
</feature>
<name>TRAI_SINFN</name>
<protein>
    <recommendedName>
        <fullName>Probable acyl-homoserine-lactone synthase</fullName>
        <ecNumber>2.3.1.184</ecNumber>
    </recommendedName>
    <alternativeName>
        <fullName>Autoinducer synthesis protein TraI</fullName>
    </alternativeName>
</protein>
<organism>
    <name type="scientific">Sinorhizobium fredii (strain NBRC 101917 / NGR234)</name>
    <dbReference type="NCBI Taxonomy" id="394"/>
    <lineage>
        <taxon>Bacteria</taxon>
        <taxon>Pseudomonadati</taxon>
        <taxon>Pseudomonadota</taxon>
        <taxon>Alphaproteobacteria</taxon>
        <taxon>Hyphomicrobiales</taxon>
        <taxon>Rhizobiaceae</taxon>
        <taxon>Sinorhizobium/Ensifer group</taxon>
        <taxon>Sinorhizobium</taxon>
    </lineage>
</organism>